<feature type="chain" id="PRO_0000334941" description="Ribonuclease HII">
    <location>
        <begin position="1"/>
        <end position="302"/>
    </location>
</feature>
<feature type="domain" description="RNase H type-2" evidence="2">
    <location>
        <begin position="53"/>
        <end position="297"/>
    </location>
</feature>
<feature type="binding site" evidence="1">
    <location>
        <position position="59"/>
    </location>
    <ligand>
        <name>a divalent metal cation</name>
        <dbReference type="ChEBI" id="CHEBI:60240"/>
    </ligand>
</feature>
<feature type="binding site" evidence="1">
    <location>
        <position position="60"/>
    </location>
    <ligand>
        <name>a divalent metal cation</name>
        <dbReference type="ChEBI" id="CHEBI:60240"/>
    </ligand>
</feature>
<feature type="binding site" evidence="1">
    <location>
        <position position="163"/>
    </location>
    <ligand>
        <name>a divalent metal cation</name>
        <dbReference type="ChEBI" id="CHEBI:60240"/>
    </ligand>
</feature>
<name>RNH2_PSYWF</name>
<evidence type="ECO:0000255" key="1">
    <source>
        <dbReference type="HAMAP-Rule" id="MF_00052"/>
    </source>
</evidence>
<evidence type="ECO:0000255" key="2">
    <source>
        <dbReference type="PROSITE-ProRule" id="PRU01319"/>
    </source>
</evidence>
<proteinExistence type="inferred from homology"/>
<gene>
    <name evidence="1" type="primary">rnhB</name>
    <name type="ordered locus">PsycPRwf_0923</name>
</gene>
<protein>
    <recommendedName>
        <fullName evidence="1">Ribonuclease HII</fullName>
        <shortName evidence="1">RNase HII</shortName>
        <ecNumber evidence="1">3.1.26.4</ecNumber>
    </recommendedName>
</protein>
<comment type="function">
    <text evidence="1">Endonuclease that specifically degrades the RNA of RNA-DNA hybrids.</text>
</comment>
<comment type="catalytic activity">
    <reaction evidence="1">
        <text>Endonucleolytic cleavage to 5'-phosphomonoester.</text>
        <dbReference type="EC" id="3.1.26.4"/>
    </reaction>
</comment>
<comment type="cofactor">
    <cofactor evidence="1">
        <name>Mn(2+)</name>
        <dbReference type="ChEBI" id="CHEBI:29035"/>
    </cofactor>
    <cofactor evidence="1">
        <name>Mg(2+)</name>
        <dbReference type="ChEBI" id="CHEBI:18420"/>
    </cofactor>
    <text evidence="1">Manganese or magnesium. Binds 1 divalent metal ion per monomer in the absence of substrate. May bind a second metal ion after substrate binding.</text>
</comment>
<comment type="subcellular location">
    <subcellularLocation>
        <location evidence="1">Cytoplasm</location>
    </subcellularLocation>
</comment>
<comment type="similarity">
    <text evidence="1">Belongs to the RNase HII family.</text>
</comment>
<accession>A5WDY2</accession>
<keyword id="KW-0963">Cytoplasm</keyword>
<keyword id="KW-0255">Endonuclease</keyword>
<keyword id="KW-0378">Hydrolase</keyword>
<keyword id="KW-0464">Manganese</keyword>
<keyword id="KW-0479">Metal-binding</keyword>
<keyword id="KW-0540">Nuclease</keyword>
<organism>
    <name type="scientific">Psychrobacter sp. (strain PRwf-1)</name>
    <dbReference type="NCBI Taxonomy" id="349106"/>
    <lineage>
        <taxon>Bacteria</taxon>
        <taxon>Pseudomonadati</taxon>
        <taxon>Pseudomonadota</taxon>
        <taxon>Gammaproteobacteria</taxon>
        <taxon>Moraxellales</taxon>
        <taxon>Moraxellaceae</taxon>
        <taxon>Psychrobacter</taxon>
    </lineage>
</organism>
<reference key="1">
    <citation type="submission" date="2007-05" db="EMBL/GenBank/DDBJ databases">
        <title>Complete sequence of chromosome of Psychrobacter sp. PRwf-1.</title>
        <authorList>
            <consortium name="US DOE Joint Genome Institute"/>
            <person name="Copeland A."/>
            <person name="Lucas S."/>
            <person name="Lapidus A."/>
            <person name="Barry K."/>
            <person name="Detter J.C."/>
            <person name="Glavina del Rio T."/>
            <person name="Hammon N."/>
            <person name="Israni S."/>
            <person name="Dalin E."/>
            <person name="Tice H."/>
            <person name="Pitluck S."/>
            <person name="Chain P."/>
            <person name="Malfatti S."/>
            <person name="Shin M."/>
            <person name="Vergez L."/>
            <person name="Schmutz J."/>
            <person name="Larimer F."/>
            <person name="Land M."/>
            <person name="Hauser L."/>
            <person name="Kyrpides N."/>
            <person name="Kim E."/>
            <person name="Tiedje J."/>
            <person name="Richardson P."/>
        </authorList>
    </citation>
    <scope>NUCLEOTIDE SEQUENCE [LARGE SCALE GENOMIC DNA]</scope>
    <source>
        <strain>PRwf-1</strain>
    </source>
</reference>
<dbReference type="EC" id="3.1.26.4" evidence="1"/>
<dbReference type="EMBL" id="CP000713">
    <property type="protein sequence ID" value="ABQ93873.1"/>
    <property type="molecule type" value="Genomic_DNA"/>
</dbReference>
<dbReference type="SMR" id="A5WDY2"/>
<dbReference type="STRING" id="349106.PsycPRwf_0923"/>
<dbReference type="KEGG" id="prw:PsycPRwf_0923"/>
<dbReference type="eggNOG" id="COG0164">
    <property type="taxonomic scope" value="Bacteria"/>
</dbReference>
<dbReference type="HOGENOM" id="CLU_036532_3_2_6"/>
<dbReference type="GO" id="GO:0005737">
    <property type="term" value="C:cytoplasm"/>
    <property type="evidence" value="ECO:0007669"/>
    <property type="project" value="UniProtKB-SubCell"/>
</dbReference>
<dbReference type="GO" id="GO:0032299">
    <property type="term" value="C:ribonuclease H2 complex"/>
    <property type="evidence" value="ECO:0007669"/>
    <property type="project" value="TreeGrafter"/>
</dbReference>
<dbReference type="GO" id="GO:0030145">
    <property type="term" value="F:manganese ion binding"/>
    <property type="evidence" value="ECO:0007669"/>
    <property type="project" value="UniProtKB-UniRule"/>
</dbReference>
<dbReference type="GO" id="GO:0003723">
    <property type="term" value="F:RNA binding"/>
    <property type="evidence" value="ECO:0007669"/>
    <property type="project" value="InterPro"/>
</dbReference>
<dbReference type="GO" id="GO:0004523">
    <property type="term" value="F:RNA-DNA hybrid ribonuclease activity"/>
    <property type="evidence" value="ECO:0007669"/>
    <property type="project" value="UniProtKB-UniRule"/>
</dbReference>
<dbReference type="GO" id="GO:0043137">
    <property type="term" value="P:DNA replication, removal of RNA primer"/>
    <property type="evidence" value="ECO:0007669"/>
    <property type="project" value="TreeGrafter"/>
</dbReference>
<dbReference type="GO" id="GO:0006298">
    <property type="term" value="P:mismatch repair"/>
    <property type="evidence" value="ECO:0007669"/>
    <property type="project" value="TreeGrafter"/>
</dbReference>
<dbReference type="CDD" id="cd07182">
    <property type="entry name" value="RNase_HII_bacteria_HII_like"/>
    <property type="match status" value="1"/>
</dbReference>
<dbReference type="Gene3D" id="3.30.420.10">
    <property type="entry name" value="Ribonuclease H-like superfamily/Ribonuclease H"/>
    <property type="match status" value="1"/>
</dbReference>
<dbReference type="HAMAP" id="MF_00052_B">
    <property type="entry name" value="RNase_HII_B"/>
    <property type="match status" value="1"/>
</dbReference>
<dbReference type="InterPro" id="IPR022898">
    <property type="entry name" value="RNase_HII"/>
</dbReference>
<dbReference type="InterPro" id="IPR001352">
    <property type="entry name" value="RNase_HII/HIII"/>
</dbReference>
<dbReference type="InterPro" id="IPR024567">
    <property type="entry name" value="RNase_HII/HIII_dom"/>
</dbReference>
<dbReference type="InterPro" id="IPR012337">
    <property type="entry name" value="RNaseH-like_sf"/>
</dbReference>
<dbReference type="InterPro" id="IPR036397">
    <property type="entry name" value="RNaseH_sf"/>
</dbReference>
<dbReference type="NCBIfam" id="NF000595">
    <property type="entry name" value="PRK00015.1-3"/>
    <property type="match status" value="1"/>
</dbReference>
<dbReference type="PANTHER" id="PTHR10954">
    <property type="entry name" value="RIBONUCLEASE H2 SUBUNIT A"/>
    <property type="match status" value="1"/>
</dbReference>
<dbReference type="PANTHER" id="PTHR10954:SF18">
    <property type="entry name" value="RIBONUCLEASE HII"/>
    <property type="match status" value="1"/>
</dbReference>
<dbReference type="Pfam" id="PF01351">
    <property type="entry name" value="RNase_HII"/>
    <property type="match status" value="2"/>
</dbReference>
<dbReference type="SUPFAM" id="SSF53098">
    <property type="entry name" value="Ribonuclease H-like"/>
    <property type="match status" value="1"/>
</dbReference>
<dbReference type="PROSITE" id="PS51975">
    <property type="entry name" value="RNASE_H_2"/>
    <property type="match status" value="1"/>
</dbReference>
<sequence>MVIEQSIYSSSQSTGTAQANLELPLSSPLHLSGRINTKALFSPDNQSQSGGFEFEIGVDEVGRGPLYGSVVVAAAILPKAWSGETEVGLLQDTPLAILTDSKKLTERKREKLFEPVKQHALAYLVVEVPAGVIDEINILQATILGMRVACEQLMVEITKVWRDASELPTAPSTPLGFKLLIDGNKVPDLDEARLATHGICLADMTVTQPAGMVKFCAEAWVKGDARHNAIAAASVLAKVYRDRQLIADGARYPGYGLEGHKGYPTKAHVEAIARLGVLPEHRRSFKPVQQAIEGTLAGTHYS</sequence>